<evidence type="ECO:0000255" key="1"/>
<evidence type="ECO:0000255" key="2">
    <source>
        <dbReference type="PROSITE-ProRule" id="PRU00498"/>
    </source>
</evidence>
<evidence type="ECO:0000256" key="3">
    <source>
        <dbReference type="SAM" id="MobiDB-lite"/>
    </source>
</evidence>
<evidence type="ECO:0000269" key="4">
    <source>
    </source>
</evidence>
<evidence type="ECO:0000303" key="5">
    <source>
    </source>
</evidence>
<evidence type="ECO:0000305" key="6"/>
<evidence type="ECO:0000305" key="7">
    <source>
    </source>
</evidence>
<reference key="1">
    <citation type="journal article" date="2013" name="Appl. Environ. Microbiol.">
        <title>Characterization of the biosynthetic genes for 10,11-dehydrocurvularin, a heat shock response-modulating anticancer fungal polyketide from Aspergillus terreus.</title>
        <authorList>
            <person name="Xu Y."/>
            <person name="Espinosa-Artiles P."/>
            <person name="Schubert V."/>
            <person name="Xu Y.M."/>
            <person name="Zhang W."/>
            <person name="Lin M."/>
            <person name="Gunatilaka A.A."/>
            <person name="Sussmuth R."/>
            <person name="Molnar I."/>
        </authorList>
    </citation>
    <scope>NUCLEOTIDE SEQUENCE [GENOMIC DNA]</scope>
    <scope>FUNCTION</scope>
    <source>
        <strain>AH-02-30-F7</strain>
    </source>
</reference>
<name>CURE_ASPTE</name>
<keyword id="KW-1003">Cell membrane</keyword>
<keyword id="KW-0325">Glycoprotein</keyword>
<keyword id="KW-0472">Membrane</keyword>
<keyword id="KW-0812">Transmembrane</keyword>
<keyword id="KW-1133">Transmembrane helix</keyword>
<keyword id="KW-0813">Transport</keyword>
<protein>
    <recommendedName>
        <fullName evidence="5">Dehydrocurvularin exporter</fullName>
    </recommendedName>
</protein>
<proteinExistence type="inferred from homology"/>
<accession>L7X3H5</accession>
<sequence>MADGSDLENNHKPELDRSQPGSTSNGSQEQKDPDEIAPEYATGVRLILVMFTIFVSTILVSLEIGIIATAIPGITNEFRRLDDVGWYGSATFILAAAASPLWGKLFKYVDVKWTYLSAVFIFLVGSIVAAAAPNSVSVIIGRAIQGWGASGVLGGTLIVINYVAPPRNHPLLIGTWMAVFMVSTILGPVIGGGFTSGVSWRWCFWINLPVGGPIIVLLLLFLRIPKHIKKVPATWQEIILALDLPGFCLLLVSLVCLTLALQWGGQTKAWNDGSVIATLVMWIVLSIAFLVTEWFQGQRAMTPFSILTLRMTWSNALFCLISYAALYQVMFYLPIYFQSIHGQSAVKSGVNTLPFLAFFALGAVVSGGVIGKTRYTQPFELLGALIMTAGMALIYILDVDSPQAMYIGAEVLFGFGVGICNQIPMTAVQGFSKQEDVSSATGIMVMCQTLSGAYFVAIAQSLFANRMLATVLSGAGHLDPALVLGTGASELQHVFSGEDLTEVIAAYMVGIKDVFAFSLACAAFAVLLSLIIPFKRLPDHGKKDKPATEEAAEEKSEAEGKVSGDKEENHS</sequence>
<feature type="chain" id="PRO_0000438394" description="Dehydrocurvularin exporter">
    <location>
        <begin position="1"/>
        <end position="571"/>
    </location>
</feature>
<feature type="transmembrane region" description="Helical" evidence="1">
    <location>
        <begin position="47"/>
        <end position="67"/>
    </location>
</feature>
<feature type="transmembrane region" description="Helical" evidence="1">
    <location>
        <begin position="86"/>
        <end position="106"/>
    </location>
</feature>
<feature type="transmembrane region" description="Helical" evidence="1">
    <location>
        <begin position="120"/>
        <end position="140"/>
    </location>
</feature>
<feature type="transmembrane region" description="Helical" evidence="1">
    <location>
        <begin position="143"/>
        <end position="163"/>
    </location>
</feature>
<feature type="transmembrane region" description="Helical" evidence="1">
    <location>
        <begin position="171"/>
        <end position="191"/>
    </location>
</feature>
<feature type="transmembrane region" description="Helical" evidence="1">
    <location>
        <begin position="202"/>
        <end position="222"/>
    </location>
</feature>
<feature type="transmembrane region" description="Helical" evidence="1">
    <location>
        <begin position="238"/>
        <end position="258"/>
    </location>
</feature>
<feature type="transmembrane region" description="Helical" evidence="1">
    <location>
        <begin position="275"/>
        <end position="295"/>
    </location>
</feature>
<feature type="transmembrane region" description="Helical" evidence="1">
    <location>
        <begin position="317"/>
        <end position="337"/>
    </location>
</feature>
<feature type="transmembrane region" description="Helical" evidence="1">
    <location>
        <begin position="350"/>
        <end position="370"/>
    </location>
</feature>
<feature type="transmembrane region" description="Helical" evidence="1">
    <location>
        <begin position="379"/>
        <end position="399"/>
    </location>
</feature>
<feature type="transmembrane region" description="Helical" evidence="1">
    <location>
        <begin position="405"/>
        <end position="425"/>
    </location>
</feature>
<feature type="transmembrane region" description="Helical" evidence="1">
    <location>
        <begin position="443"/>
        <end position="463"/>
    </location>
</feature>
<feature type="transmembrane region" description="Helical" evidence="1">
    <location>
        <begin position="514"/>
        <end position="534"/>
    </location>
</feature>
<feature type="region of interest" description="Disordered" evidence="3">
    <location>
        <begin position="1"/>
        <end position="34"/>
    </location>
</feature>
<feature type="region of interest" description="Disordered" evidence="3">
    <location>
        <begin position="538"/>
        <end position="571"/>
    </location>
</feature>
<feature type="compositionally biased region" description="Basic and acidic residues" evidence="3">
    <location>
        <begin position="8"/>
        <end position="17"/>
    </location>
</feature>
<feature type="compositionally biased region" description="Polar residues" evidence="3">
    <location>
        <begin position="19"/>
        <end position="28"/>
    </location>
</feature>
<feature type="glycosylation site" description="N-linked (GlcNAc...) asparagine" evidence="2">
    <location>
        <position position="25"/>
    </location>
</feature>
<organism>
    <name type="scientific">Aspergillus terreus</name>
    <dbReference type="NCBI Taxonomy" id="33178"/>
    <lineage>
        <taxon>Eukaryota</taxon>
        <taxon>Fungi</taxon>
        <taxon>Dikarya</taxon>
        <taxon>Ascomycota</taxon>
        <taxon>Pezizomycotina</taxon>
        <taxon>Eurotiomycetes</taxon>
        <taxon>Eurotiomycetidae</taxon>
        <taxon>Eurotiales</taxon>
        <taxon>Aspergillaceae</taxon>
        <taxon>Aspergillus</taxon>
        <taxon>Aspergillus subgen. Circumdati</taxon>
    </lineage>
</organism>
<gene>
    <name evidence="5" type="primary">curE</name>
</gene>
<comment type="function">
    <text evidence="4">Efflux pump that is probably involved in the export of dehydrocurvularin (PubMed:23335766).</text>
</comment>
<comment type="subcellular location">
    <subcellularLocation>
        <location evidence="7">Cell membrane</location>
        <topology evidence="1">Multi-pass membrane protein</topology>
    </subcellularLocation>
</comment>
<comment type="similarity">
    <text evidence="6">Belongs to the major facilitator superfamily. TCR/Tet family.</text>
</comment>
<dbReference type="EMBL" id="JX971534">
    <property type="protein sequence ID" value="AGC95323.1"/>
    <property type="molecule type" value="Genomic_DNA"/>
</dbReference>
<dbReference type="SMR" id="L7X3H5"/>
<dbReference type="GlyCosmos" id="L7X3H5">
    <property type="glycosylation" value="1 site, No reported glycans"/>
</dbReference>
<dbReference type="VEuPathDB" id="FungiDB:ATEG_04563"/>
<dbReference type="GO" id="GO:0005886">
    <property type="term" value="C:plasma membrane"/>
    <property type="evidence" value="ECO:0007669"/>
    <property type="project" value="UniProtKB-SubCell"/>
</dbReference>
<dbReference type="GO" id="GO:0022857">
    <property type="term" value="F:transmembrane transporter activity"/>
    <property type="evidence" value="ECO:0007669"/>
    <property type="project" value="InterPro"/>
</dbReference>
<dbReference type="CDD" id="cd17502">
    <property type="entry name" value="MFS_Azr1_MDR_like"/>
    <property type="match status" value="1"/>
</dbReference>
<dbReference type="Gene3D" id="1.20.1250.20">
    <property type="entry name" value="MFS general substrate transporter like domains"/>
    <property type="match status" value="2"/>
</dbReference>
<dbReference type="InterPro" id="IPR011701">
    <property type="entry name" value="MFS"/>
</dbReference>
<dbReference type="InterPro" id="IPR020846">
    <property type="entry name" value="MFS_dom"/>
</dbReference>
<dbReference type="InterPro" id="IPR036259">
    <property type="entry name" value="MFS_trans_sf"/>
</dbReference>
<dbReference type="PANTHER" id="PTHR23501">
    <property type="entry name" value="MAJOR FACILITATOR SUPERFAMILY"/>
    <property type="match status" value="1"/>
</dbReference>
<dbReference type="PANTHER" id="PTHR23501:SF177">
    <property type="entry name" value="MAJOR FACILITATOR SUPERFAMILY (MFS) PROFILE DOMAIN-CONTAINING PROTEIN-RELATED"/>
    <property type="match status" value="1"/>
</dbReference>
<dbReference type="Pfam" id="PF07690">
    <property type="entry name" value="MFS_1"/>
    <property type="match status" value="1"/>
</dbReference>
<dbReference type="SUPFAM" id="SSF103473">
    <property type="entry name" value="MFS general substrate transporter"/>
    <property type="match status" value="1"/>
</dbReference>
<dbReference type="PROSITE" id="PS50850">
    <property type="entry name" value="MFS"/>
    <property type="match status" value="1"/>
</dbReference>